<name>H2A1K_MOUSE</name>
<keyword id="KW-0002">3D-structure</keyword>
<keyword id="KW-0007">Acetylation</keyword>
<keyword id="KW-0158">Chromosome</keyword>
<keyword id="KW-0164">Citrullination</keyword>
<keyword id="KW-0238">DNA-binding</keyword>
<keyword id="KW-0379">Hydroxylation</keyword>
<keyword id="KW-1017">Isopeptide bond</keyword>
<keyword id="KW-0488">Methylation</keyword>
<keyword id="KW-0544">Nucleosome core</keyword>
<keyword id="KW-0539">Nucleus</keyword>
<keyword id="KW-0597">Phosphoprotein</keyword>
<keyword id="KW-1185">Reference proteome</keyword>
<keyword id="KW-0832">Ubl conjugation</keyword>
<feature type="initiator methionine" description="Removed" evidence="4">
    <location>
        <position position="1"/>
    </location>
</feature>
<feature type="chain" id="PRO_0000227509" description="Histone H2A type 1-K">
    <location>
        <begin position="2"/>
        <end position="130"/>
    </location>
</feature>
<feature type="region of interest" description="Disordered" evidence="5">
    <location>
        <begin position="1"/>
        <end position="22"/>
    </location>
</feature>
<feature type="compositionally biased region" description="Basic residues" evidence="5">
    <location>
        <begin position="7"/>
        <end position="19"/>
    </location>
</feature>
<feature type="modified residue" description="N-acetylserine" evidence="4">
    <location>
        <position position="2"/>
    </location>
</feature>
<feature type="modified residue" description="Phosphoserine; by RPS6KA5" evidence="4">
    <location>
        <position position="2"/>
    </location>
</feature>
<feature type="modified residue" description="Citrulline; alternate" evidence="2">
    <location>
        <position position="4"/>
    </location>
</feature>
<feature type="modified residue" description="Symmetric dimethylarginine; by PRMT5; alternate" evidence="14">
    <location>
        <position position="4"/>
    </location>
</feature>
<feature type="modified residue" description="N6-(2-hydroxyisobutyryl)lysine; alternate" evidence="11">
    <location>
        <position position="6"/>
    </location>
</feature>
<feature type="modified residue" description="N6-(beta-hydroxybutyryl)lysine; alternate" evidence="12">
    <location>
        <position position="6"/>
    </location>
</feature>
<feature type="modified residue" description="N6-acetyllysine; alternate" evidence="3">
    <location>
        <position position="6"/>
    </location>
</feature>
<feature type="modified residue" description="N6-(2-hydroxyisobutyryl)lysine; alternate" evidence="11">
    <location>
        <position position="10"/>
    </location>
</feature>
<feature type="modified residue" description="N6-acetyllysine; alternate" evidence="3">
    <location>
        <position position="10"/>
    </location>
</feature>
<feature type="modified residue" description="N6-lactoyllysine; alternate" evidence="1">
    <location>
        <position position="10"/>
    </location>
</feature>
<feature type="modified residue" description="N6-succinyllysine; alternate" evidence="4">
    <location>
        <position position="10"/>
    </location>
</feature>
<feature type="modified residue" description="N6-(2-hydroxyisobutyryl)lysine; alternate" evidence="11">
    <location>
        <position position="37"/>
    </location>
</feature>
<feature type="modified residue" description="N6-(beta-hydroxybutyryl)lysine; alternate" evidence="12">
    <location>
        <position position="37"/>
    </location>
</feature>
<feature type="modified residue" description="N6-crotonyllysine; alternate" evidence="9">
    <location>
        <position position="37"/>
    </location>
</feature>
<feature type="modified residue" description="N6-(2-hydroxyisobutyryl)lysine" evidence="11">
    <location>
        <position position="75"/>
    </location>
</feature>
<feature type="modified residue" description="N6-(2-hydroxyisobutyryl)lysine" evidence="11">
    <location>
        <position position="76"/>
    </location>
</feature>
<feature type="modified residue" description="N6-(2-hydroxyisobutyryl)lysine; alternate" evidence="11">
    <location>
        <position position="96"/>
    </location>
</feature>
<feature type="modified residue" description="N6-glutaryllysine; alternate" evidence="2">
    <location>
        <position position="96"/>
    </location>
</feature>
<feature type="modified residue" description="N6-succinyllysine; alternate" evidence="4">
    <location>
        <position position="96"/>
    </location>
</feature>
<feature type="modified residue" description="N5-methylglutamine" evidence="10">
    <location>
        <position position="105"/>
    </location>
</feature>
<feature type="modified residue" description="N6-(2-hydroxyisobutyryl)lysine; alternate" evidence="11">
    <location>
        <position position="119"/>
    </location>
</feature>
<feature type="modified residue" description="N6-crotonyllysine; alternate" evidence="9">
    <location>
        <position position="119"/>
    </location>
</feature>
<feature type="modified residue" description="N6-glutaryllysine; alternate" evidence="2">
    <location>
        <position position="119"/>
    </location>
</feature>
<feature type="modified residue" description="N6-(beta-hydroxybutyryl)lysine; alternate" evidence="12">
    <location>
        <position position="120"/>
    </location>
</feature>
<feature type="modified residue" description="N6-crotonyllysine; alternate" evidence="2">
    <location>
        <position position="120"/>
    </location>
</feature>
<feature type="modified residue" description="N6-glutaryllysine; alternate" evidence="2">
    <location>
        <position position="120"/>
    </location>
</feature>
<feature type="modified residue" description="Phosphothreonine; by DCAF1" evidence="4">
    <location>
        <position position="121"/>
    </location>
</feature>
<feature type="modified residue" description="N6-(beta-hydroxybutyryl)lysine; alternate" evidence="12">
    <location>
        <position position="126"/>
    </location>
</feature>
<feature type="modified residue" description="N6-crotonyllysine; alternate" evidence="2">
    <location>
        <position position="126"/>
    </location>
</feature>
<feature type="modified residue" description="N6-glutaryllysine; alternate" evidence="2">
    <location>
        <position position="126"/>
    </location>
</feature>
<feature type="cross-link" description="Glycyl lysine isopeptide (Lys-Gly) (interchain with G-Cter in ubiquitin)" evidence="4">
    <location>
        <position position="14"/>
    </location>
</feature>
<feature type="cross-link" description="Glycyl lysine isopeptide (Lys-Gly) (interchain with G-Cter in ubiquitin)" evidence="4">
    <location>
        <position position="16"/>
    </location>
</feature>
<feature type="cross-link" description="Glycyl lysine isopeptide (Lys-Gly) (interchain with G-Cter in ubiquitin); alternate" evidence="6 7">
    <location>
        <position position="120"/>
    </location>
</feature>
<feature type="helix" evidence="16">
    <location>
        <begin position="18"/>
        <end position="22"/>
    </location>
</feature>
<feature type="helix" evidence="16">
    <location>
        <begin position="28"/>
        <end position="36"/>
    </location>
</feature>
<feature type="helix" evidence="16">
    <location>
        <begin position="37"/>
        <end position="39"/>
    </location>
</feature>
<feature type="strand" evidence="16">
    <location>
        <begin position="42"/>
        <end position="44"/>
    </location>
</feature>
<feature type="helix" evidence="16">
    <location>
        <begin position="48"/>
        <end position="73"/>
    </location>
</feature>
<feature type="strand" evidence="16">
    <location>
        <begin position="77"/>
        <end position="79"/>
    </location>
</feature>
<feature type="helix" evidence="16">
    <location>
        <begin position="81"/>
        <end position="89"/>
    </location>
</feature>
<feature type="helix" evidence="16">
    <location>
        <begin position="92"/>
        <end position="97"/>
    </location>
</feature>
<feature type="turn" evidence="16">
    <location>
        <begin position="98"/>
        <end position="100"/>
    </location>
</feature>
<feature type="helix" evidence="16">
    <location>
        <begin position="114"/>
        <end position="116"/>
    </location>
</feature>
<sequence length="130" mass="14150">MSGRGKQGGKARAKAKTRSSRAGLQFPVGRVHRLLRKGNYSERVGAGAPVYLAAVLEYLTAEILELAGNAARDNKKTRIIPRHLQLAIRNDEELNKLLGRVTIAQGGVLPNIQAVLLPKKTETHHKAKGK</sequence>
<evidence type="ECO:0000250" key="1">
    <source>
        <dbReference type="UniProtKB" id="P0C0S5"/>
    </source>
</evidence>
<evidence type="ECO:0000250" key="2">
    <source>
        <dbReference type="UniProtKB" id="P0C0S8"/>
    </source>
</evidence>
<evidence type="ECO:0000250" key="3">
    <source>
        <dbReference type="UniProtKB" id="Q8R1M2"/>
    </source>
</evidence>
<evidence type="ECO:0000250" key="4">
    <source>
        <dbReference type="UniProtKB" id="Q93077"/>
    </source>
</evidence>
<evidence type="ECO:0000256" key="5">
    <source>
        <dbReference type="SAM" id="MobiDB-lite"/>
    </source>
</evidence>
<evidence type="ECO:0000269" key="6">
    <source>
    </source>
</evidence>
<evidence type="ECO:0000269" key="7">
    <source>
    </source>
</evidence>
<evidence type="ECO:0000269" key="8">
    <source>
    </source>
</evidence>
<evidence type="ECO:0000269" key="9">
    <source>
    </source>
</evidence>
<evidence type="ECO:0000269" key="10">
    <source>
    </source>
</evidence>
<evidence type="ECO:0000269" key="11">
    <source>
    </source>
</evidence>
<evidence type="ECO:0000269" key="12">
    <source>
    </source>
</evidence>
<evidence type="ECO:0000305" key="13"/>
<evidence type="ECO:0000305" key="14">
    <source>
    </source>
</evidence>
<evidence type="ECO:0000312" key="15">
    <source>
        <dbReference type="MGI" id="MGI:2448297"/>
    </source>
</evidence>
<evidence type="ECO:0007829" key="16">
    <source>
        <dbReference type="PDB" id="8OTT"/>
    </source>
</evidence>
<dbReference type="EMBL" id="AY158911">
    <property type="protein sequence ID" value="AAO06221.1"/>
    <property type="molecule type" value="Genomic_DNA"/>
</dbReference>
<dbReference type="EMBL" id="AL589651">
    <property type="status" value="NOT_ANNOTATED_CDS"/>
    <property type="molecule type" value="Genomic_DNA"/>
</dbReference>
<dbReference type="EMBL" id="BC119335">
    <property type="protein sequence ID" value="AAI19336.1"/>
    <property type="molecule type" value="mRNA"/>
</dbReference>
<dbReference type="CCDS" id="CCDS26293.1"/>
<dbReference type="RefSeq" id="NP_835490.1">
    <property type="nucleotide sequence ID" value="NM_178183.2"/>
</dbReference>
<dbReference type="PDB" id="8OTT">
    <property type="method" value="EM"/>
    <property type="resolution" value="3.30 A"/>
    <property type="chains" value="G=11-118"/>
</dbReference>
<dbReference type="PDBsum" id="8OTT"/>
<dbReference type="EMDB" id="EMD-17184"/>
<dbReference type="SMR" id="Q8CGP7"/>
<dbReference type="BioGRID" id="235088">
    <property type="interactions" value="1"/>
</dbReference>
<dbReference type="FunCoup" id="Q8CGP7">
    <property type="interactions" value="319"/>
</dbReference>
<dbReference type="IntAct" id="Q8CGP7">
    <property type="interactions" value="1"/>
</dbReference>
<dbReference type="STRING" id="10090.ENSMUSP00000074310"/>
<dbReference type="GlyGen" id="Q8CGP7">
    <property type="glycosylation" value="1 site, 1 O-linked glycan (1 site)"/>
</dbReference>
<dbReference type="iPTMnet" id="Q8CGP7"/>
<dbReference type="PhosphoSitePlus" id="Q8CGP7"/>
<dbReference type="SwissPalm" id="Q8CGP7"/>
<dbReference type="jPOST" id="Q8CGP7"/>
<dbReference type="PaxDb" id="10090-ENSMUSP00000074310"/>
<dbReference type="PeptideAtlas" id="Q8CGP7"/>
<dbReference type="ProteomicsDB" id="270877"/>
<dbReference type="Pumba" id="Q8CGP7"/>
<dbReference type="TopDownProteomics" id="Q8CGP7"/>
<dbReference type="Ensembl" id="ENSMUST00000074752.4">
    <property type="protein sequence ID" value="ENSMUSP00000074310.3"/>
    <property type="gene ID" value="ENSMUSG00000063021.4"/>
</dbReference>
<dbReference type="GeneID" id="319169"/>
<dbReference type="KEGG" id="mmu:319169"/>
<dbReference type="UCSC" id="uc007prg.2">
    <property type="organism name" value="mouse"/>
</dbReference>
<dbReference type="AGR" id="MGI:2448297"/>
<dbReference type="CTD" id="8330"/>
<dbReference type="MGI" id="MGI:2448297">
    <property type="gene designation" value="H2ac15"/>
</dbReference>
<dbReference type="VEuPathDB" id="HostDB:ENSMUSG00000063021"/>
<dbReference type="eggNOG" id="KOG1756">
    <property type="taxonomic scope" value="Eukaryota"/>
</dbReference>
<dbReference type="GeneTree" id="ENSGT00940000153092"/>
<dbReference type="HOGENOM" id="CLU_062828_3_1_1"/>
<dbReference type="InParanoid" id="Q8CGP7"/>
<dbReference type="OMA" id="HATIAYG"/>
<dbReference type="OrthoDB" id="9610409at2759"/>
<dbReference type="PhylomeDB" id="Q8CGP7"/>
<dbReference type="TreeFam" id="TF300137"/>
<dbReference type="Reactome" id="R-MMU-110330">
    <property type="pathway name" value="Recognition and association of DNA glycosylase with site containing an affected purine"/>
</dbReference>
<dbReference type="Reactome" id="R-MMU-110331">
    <property type="pathway name" value="Cleavage of the damaged purine"/>
</dbReference>
<dbReference type="Reactome" id="R-MMU-212300">
    <property type="pathway name" value="PRC2 methylates histones and DNA"/>
</dbReference>
<dbReference type="Reactome" id="R-MMU-2299718">
    <property type="pathway name" value="Condensation of Prophase Chromosomes"/>
</dbReference>
<dbReference type="Reactome" id="R-MMU-2559586">
    <property type="pathway name" value="DNA Damage/Telomere Stress Induced Senescence"/>
</dbReference>
<dbReference type="Reactome" id="R-MMU-3214815">
    <property type="pathway name" value="HDACs deacetylate histones"/>
</dbReference>
<dbReference type="Reactome" id="R-MMU-3214858">
    <property type="pathway name" value="RMTs methylate histone arginines"/>
</dbReference>
<dbReference type="Reactome" id="R-MMU-5689603">
    <property type="pathway name" value="UCH proteinases"/>
</dbReference>
<dbReference type="Reactome" id="R-MMU-5689880">
    <property type="pathway name" value="Ub-specific processing proteases"/>
</dbReference>
<dbReference type="Reactome" id="R-MMU-5689901">
    <property type="pathway name" value="Metalloprotease DUBs"/>
</dbReference>
<dbReference type="Reactome" id="R-MMU-606279">
    <property type="pathway name" value="Deposition of new CENPA-containing nucleosomes at the centromere"/>
</dbReference>
<dbReference type="Reactome" id="R-MMU-8936459">
    <property type="pathway name" value="RUNX1 regulates genes involved in megakaryocyte differentiation and platelet function"/>
</dbReference>
<dbReference type="Reactome" id="R-MMU-9670095">
    <property type="pathway name" value="Inhibition of DNA recombination at telomere"/>
</dbReference>
<dbReference type="Reactome" id="R-MMU-9841922">
    <property type="pathway name" value="MLL4 and MLL3 complexes regulate expression of PPARG target genes in adipogenesis and hepatic steatosis"/>
</dbReference>
<dbReference type="Reactome" id="R-MMU-9843940">
    <property type="pathway name" value="Regulation of endogenous retroelements by KRAB-ZFP proteins"/>
</dbReference>
<dbReference type="BioGRID-ORCS" id="319169">
    <property type="hits" value="10 hits in 79 CRISPR screens"/>
</dbReference>
<dbReference type="PRO" id="PR:Q8CGP7"/>
<dbReference type="Proteomes" id="UP000000589">
    <property type="component" value="Chromosome 13"/>
</dbReference>
<dbReference type="RNAct" id="Q8CGP7">
    <property type="molecule type" value="protein"/>
</dbReference>
<dbReference type="Bgee" id="ENSMUSG00000063021">
    <property type="expression patterns" value="Expressed in uterus and 45 other cell types or tissues"/>
</dbReference>
<dbReference type="GO" id="GO:0000786">
    <property type="term" value="C:nucleosome"/>
    <property type="evidence" value="ECO:0007669"/>
    <property type="project" value="UniProtKB-KW"/>
</dbReference>
<dbReference type="GO" id="GO:0005634">
    <property type="term" value="C:nucleus"/>
    <property type="evidence" value="ECO:0007669"/>
    <property type="project" value="UniProtKB-SubCell"/>
</dbReference>
<dbReference type="GO" id="GO:0003677">
    <property type="term" value="F:DNA binding"/>
    <property type="evidence" value="ECO:0007669"/>
    <property type="project" value="UniProtKB-KW"/>
</dbReference>
<dbReference type="GO" id="GO:0046982">
    <property type="term" value="F:protein heterodimerization activity"/>
    <property type="evidence" value="ECO:0007669"/>
    <property type="project" value="InterPro"/>
</dbReference>
<dbReference type="GO" id="GO:0030527">
    <property type="term" value="F:structural constituent of chromatin"/>
    <property type="evidence" value="ECO:0007669"/>
    <property type="project" value="InterPro"/>
</dbReference>
<dbReference type="CDD" id="cd00074">
    <property type="entry name" value="HFD_H2A"/>
    <property type="match status" value="1"/>
</dbReference>
<dbReference type="FunFam" id="1.10.20.10:FF:000103">
    <property type="entry name" value="Histone H2A type 1"/>
    <property type="match status" value="1"/>
</dbReference>
<dbReference type="Gene3D" id="1.10.20.10">
    <property type="entry name" value="Histone, subunit A"/>
    <property type="match status" value="1"/>
</dbReference>
<dbReference type="InterPro" id="IPR009072">
    <property type="entry name" value="Histone-fold"/>
</dbReference>
<dbReference type="InterPro" id="IPR002119">
    <property type="entry name" value="Histone_H2A"/>
</dbReference>
<dbReference type="InterPro" id="IPR007125">
    <property type="entry name" value="Histone_H2A/H2B/H3"/>
</dbReference>
<dbReference type="InterPro" id="IPR032454">
    <property type="entry name" value="Histone_H2A_C"/>
</dbReference>
<dbReference type="InterPro" id="IPR032458">
    <property type="entry name" value="Histone_H2A_CS"/>
</dbReference>
<dbReference type="PANTHER" id="PTHR23430">
    <property type="entry name" value="HISTONE H2A"/>
    <property type="match status" value="1"/>
</dbReference>
<dbReference type="Pfam" id="PF00125">
    <property type="entry name" value="Histone"/>
    <property type="match status" value="1"/>
</dbReference>
<dbReference type="Pfam" id="PF16211">
    <property type="entry name" value="Histone_H2A_C"/>
    <property type="match status" value="1"/>
</dbReference>
<dbReference type="PRINTS" id="PR00620">
    <property type="entry name" value="HISTONEH2A"/>
</dbReference>
<dbReference type="SMART" id="SM00414">
    <property type="entry name" value="H2A"/>
    <property type="match status" value="1"/>
</dbReference>
<dbReference type="SUPFAM" id="SSF47113">
    <property type="entry name" value="Histone-fold"/>
    <property type="match status" value="1"/>
</dbReference>
<dbReference type="PROSITE" id="PS00046">
    <property type="entry name" value="HISTONE_H2A"/>
    <property type="match status" value="1"/>
</dbReference>
<proteinExistence type="evidence at protein level"/>
<organism>
    <name type="scientific">Mus musculus</name>
    <name type="common">Mouse</name>
    <dbReference type="NCBI Taxonomy" id="10090"/>
    <lineage>
        <taxon>Eukaryota</taxon>
        <taxon>Metazoa</taxon>
        <taxon>Chordata</taxon>
        <taxon>Craniata</taxon>
        <taxon>Vertebrata</taxon>
        <taxon>Euteleostomi</taxon>
        <taxon>Mammalia</taxon>
        <taxon>Eutheria</taxon>
        <taxon>Euarchontoglires</taxon>
        <taxon>Glires</taxon>
        <taxon>Rodentia</taxon>
        <taxon>Myomorpha</taxon>
        <taxon>Muroidea</taxon>
        <taxon>Muridae</taxon>
        <taxon>Murinae</taxon>
        <taxon>Mus</taxon>
        <taxon>Mus</taxon>
    </lineage>
</organism>
<accession>Q8CGP7</accession>
<accession>Q0VE75</accession>
<reference key="1">
    <citation type="journal article" date="2002" name="Genomics">
        <title>The human and mouse replication-dependent histone genes.</title>
        <authorList>
            <person name="Marzluff W.F."/>
            <person name="Gongidi P."/>
            <person name="Woods K.R."/>
            <person name="Jin J."/>
            <person name="Maltais L.J."/>
        </authorList>
    </citation>
    <scope>NUCLEOTIDE SEQUENCE [GENOMIC DNA]</scope>
</reference>
<reference key="2">
    <citation type="journal article" date="2009" name="PLoS Biol.">
        <title>Lineage-specific biology revealed by a finished genome assembly of the mouse.</title>
        <authorList>
            <person name="Church D.M."/>
            <person name="Goodstadt L."/>
            <person name="Hillier L.W."/>
            <person name="Zody M.C."/>
            <person name="Goldstein S."/>
            <person name="She X."/>
            <person name="Bult C.J."/>
            <person name="Agarwala R."/>
            <person name="Cherry J.L."/>
            <person name="DiCuccio M."/>
            <person name="Hlavina W."/>
            <person name="Kapustin Y."/>
            <person name="Meric P."/>
            <person name="Maglott D."/>
            <person name="Birtle Z."/>
            <person name="Marques A.C."/>
            <person name="Graves T."/>
            <person name="Zhou S."/>
            <person name="Teague B."/>
            <person name="Potamousis K."/>
            <person name="Churas C."/>
            <person name="Place M."/>
            <person name="Herschleb J."/>
            <person name="Runnheim R."/>
            <person name="Forrest D."/>
            <person name="Amos-Landgraf J."/>
            <person name="Schwartz D.C."/>
            <person name="Cheng Z."/>
            <person name="Lindblad-Toh K."/>
            <person name="Eichler E.E."/>
            <person name="Ponting C.P."/>
        </authorList>
    </citation>
    <scope>NUCLEOTIDE SEQUENCE [LARGE SCALE GENOMIC DNA]</scope>
    <source>
        <strain>C57BL/6J</strain>
    </source>
</reference>
<reference key="3">
    <citation type="journal article" date="2004" name="Genome Res.">
        <title>The status, quality, and expansion of the NIH full-length cDNA project: the Mammalian Gene Collection (MGC).</title>
        <authorList>
            <consortium name="The MGC Project Team"/>
        </authorList>
    </citation>
    <scope>NUCLEOTIDE SEQUENCE [LARGE SCALE MRNA]</scope>
    <source>
        <tissue>Brain</tissue>
    </source>
</reference>
<reference key="4">
    <citation type="journal article" date="2004" name="Dev. Cell">
        <title>Polycomb group proteins Ring1A/B link ubiquitylation of histone H2A to heritable gene silencing and X inactivation.</title>
        <authorList>
            <person name="de Napoles M."/>
            <person name="Mermoud J.E."/>
            <person name="Wakao R."/>
            <person name="Tang Y.A."/>
            <person name="Endoh M."/>
            <person name="Appanah R."/>
            <person name="Nesterova T.B."/>
            <person name="Silva J."/>
            <person name="Otte A.P."/>
            <person name="Vidal M."/>
            <person name="Koseki H."/>
            <person name="Brockdorff N."/>
        </authorList>
    </citation>
    <scope>UBIQUITINATION AT LYS-120</scope>
</reference>
<reference key="5">
    <citation type="journal article" date="2004" name="J. Biol. Chem.">
        <title>Ring1b-mediated H2A ubiquitination associates with inactive X chromosomes and is involved in initiation of X inactivation.</title>
        <authorList>
            <person name="Fang J."/>
            <person name="Chen T."/>
            <person name="Chadwick B."/>
            <person name="Li E."/>
            <person name="Zhang Y."/>
        </authorList>
    </citation>
    <scope>UBIQUITINATION AT LYS-120</scope>
</reference>
<reference key="6">
    <citation type="journal article" date="2006" name="Nat. Cell Biol.">
        <title>Blimp1 associates with Prmt5 and directs histone arginine methylation in mouse germ cells.</title>
        <authorList>
            <person name="Ancelin K."/>
            <person name="Lange U.C."/>
            <person name="Hajkova P."/>
            <person name="Schneider R."/>
            <person name="Bannister A.J."/>
            <person name="Kouzarides T."/>
            <person name="Surani M.A."/>
        </authorList>
    </citation>
    <scope>METHYLATION AT ARG-4</scope>
</reference>
<reference key="7">
    <citation type="journal article" date="2011" name="Cell">
        <title>Identification of 67 histone marks and histone lysine crotonylation as a new type of histone modification.</title>
        <authorList>
            <person name="Tan M."/>
            <person name="Luo H."/>
            <person name="Lee S."/>
            <person name="Jin F."/>
            <person name="Yang J.S."/>
            <person name="Montellier E."/>
            <person name="Buchou T."/>
            <person name="Cheng Z."/>
            <person name="Rousseaux S."/>
            <person name="Rajagopal N."/>
            <person name="Lu Z."/>
            <person name="Ye Z."/>
            <person name="Zhu Q."/>
            <person name="Wysocka J."/>
            <person name="Ye Y."/>
            <person name="Khochbin S."/>
            <person name="Ren B."/>
            <person name="Zhao Y."/>
        </authorList>
    </citation>
    <scope>CROTONYLATION AT LYS-37 AND LYS-119</scope>
</reference>
<reference key="8">
    <citation type="journal article" date="2014" name="Nat. Chem. Biol.">
        <title>Lysine 2-hydroxyisobutyrylation is a widely distributed active histone mark.</title>
        <authorList>
            <person name="Dai L."/>
            <person name="Peng C."/>
            <person name="Montellier E."/>
            <person name="Lu Z."/>
            <person name="Chen Y."/>
            <person name="Ishii H."/>
            <person name="Debernardi A."/>
            <person name="Buchou T."/>
            <person name="Rousseaux S."/>
            <person name="Jin F."/>
            <person name="Sabari B.R."/>
            <person name="Deng Z."/>
            <person name="Allis C.D."/>
            <person name="Ren B."/>
            <person name="Khochbin S."/>
            <person name="Zhao Y."/>
        </authorList>
    </citation>
    <scope>HYDROXYBUTYRYLATION AT LYS-6; LYS-10; LYS-37; LYS-75; LYS-76; LYS-96 AND LYS-119</scope>
</reference>
<reference key="9">
    <citation type="journal article" date="2014" name="Nature">
        <title>Glutamine methylation in histone H2A is an RNA-polymerase-I-dedicated modification.</title>
        <authorList>
            <person name="Tessarz P."/>
            <person name="Santos-Rosa H."/>
            <person name="Robson S.C."/>
            <person name="Sylvestersen K.B."/>
            <person name="Nelson C.J."/>
            <person name="Nielsen M.L."/>
            <person name="Kouzarides T."/>
        </authorList>
    </citation>
    <scope>METHYLATION AT GLN-105</scope>
</reference>
<reference key="10">
    <citation type="journal article" date="2016" name="Mol. Cell">
        <title>Metabolic regulation of gene expression by histone lysine beta-hydroxybutyrylation.</title>
        <authorList>
            <person name="Xie Z."/>
            <person name="Zhang D."/>
            <person name="Chung D."/>
            <person name="Tang Z."/>
            <person name="Huang H."/>
            <person name="Dai L."/>
            <person name="Qi S."/>
            <person name="Li J."/>
            <person name="Colak G."/>
            <person name="Chen Y."/>
            <person name="Xia C."/>
            <person name="Peng C."/>
            <person name="Ruan H."/>
            <person name="Kirkey M."/>
            <person name="Wang D."/>
            <person name="Jensen L.M."/>
            <person name="Kwon O.K."/>
            <person name="Lee S."/>
            <person name="Pletcher S.D."/>
            <person name="Tan M."/>
            <person name="Lombard D.B."/>
            <person name="White K.P."/>
            <person name="Zhao H."/>
            <person name="Li J."/>
            <person name="Roeder R.G."/>
            <person name="Yang X."/>
            <person name="Zhao Y."/>
        </authorList>
    </citation>
    <scope>HYDROXYBUTYRYLATION AT LYS-6; LYS-37; LYS-120 AND LYS-126</scope>
</reference>
<gene>
    <name evidence="15" type="primary">H2ac15</name>
    <name type="synonym">Hist1h2ak</name>
</gene>
<protein>
    <recommendedName>
        <fullName>Histone H2A type 1-K</fullName>
    </recommendedName>
</protein>
<comment type="function">
    <text>Core component of nucleosome. Nucleosomes wrap and compact DNA into chromatin, limiting DNA accessibility to the cellular machineries which require DNA as a template. Histones thereby play a central role in transcription regulation, DNA repair, DNA replication and chromosomal stability. DNA accessibility is regulated via a complex set of post-translational modifications of histones, also called histone code, and nucleosome remodeling.</text>
</comment>
<comment type="subunit">
    <text>The nucleosome is a histone octamer containing two molecules each of H2A, H2B, H3 and H4 assembled in one H3-H4 heterotetramer and two H2A-H2B heterodimers. The octamer wraps approximately 147 bp of DNA.</text>
</comment>
<comment type="subcellular location">
    <subcellularLocation>
        <location>Nucleus</location>
    </subcellularLocation>
    <subcellularLocation>
        <location>Chromosome</location>
    </subcellularLocation>
</comment>
<comment type="PTM">
    <text evidence="2">Deiminated on Arg-4 in granulocytes upon calcium entry.</text>
</comment>
<comment type="PTM">
    <text evidence="2 6 7 10">Monoubiquitination of Lys-120 (H2AK119Ub) by RING1, TRIM37 and RNF2/RING2 complex gives a specific tag for epigenetic transcriptional repression and participates in X chromosome inactivation of female mammals. It is involved in the initiation of both imprinted and random X inactivation. Ubiquitinated H2A is enriched in inactive X chromosome chromatin. Ubiquitination of H2A functions downstream of methylation of 'Lys-27' of histone H3 (H3K27me). H2AK119Ub by RNF2/RING2 can also be induced by ultraviolet and may be involved in DNA repair. Following DNA double-strand breaks (DSBs), it is ubiquitinated through 'Lys-63' linkage of ubiquitin moieties by the E2 ligase UBE2N and the E3 ligases RNF8 and RNF168, leading to the recruitment of repair proteins to sites of DNA damage. Ubiquitination at Lys-14 and Lys-16 (H2AK13Ub and H2AK15Ub, respectively) in response to DNA damage is initiated by RNF168 that mediates monoubiquitination at these 2 sites, and 'Lys-63'-linked ubiquitin are then conjugated to monoubiquitin; RNF8 is able to extend 'Lys-63'-linked ubiquitin chains in vitro. Deubiquitinated by USP51 at Lys-14 and Lys-16 (H2AK13Ub and H2AK15Ub, respectively) after damaged DNA is repaired (By similarity). H2AK119Ub and ionizing radiation-induced 'Lys-63'-linked ubiquitination (H2AK13Ub and H2AK15Ub) are distinct events.</text>
</comment>
<comment type="PTM">
    <text evidence="2">Phosphorylation on Ser-2 (H2AS1ph) is enhanced during mitosis. Phosphorylation on Ser-2 by RPS6KA5/MSK1 directly represses transcription. Acetylation of H3 inhibits Ser-2 phosphorylation by RPS6KA5/MSK1. Phosphorylation at Thr-121 (H2AT120ph) by DCAF1 is present in the regulatory region of many tumor suppresor genes and down-regulates their transcription.</text>
</comment>
<comment type="PTM">
    <text evidence="8">Symmetric dimethylation on Arg-4 by the PRDM1/PRMT5 complex may play a crucial role in the germ-cell lineage.</text>
</comment>
<comment type="PTM">
    <text evidence="10">Glutamine methylation at Gln-105 (H2AQ104me) by FBL is specifically dedicated to polymerase I. It is present at 35S ribosomal DNA locus and impairs binding of the FACT complex.</text>
</comment>
<comment type="PTM">
    <text evidence="9">Crotonylation (Kcr) is specifically present in male germ cells and marks testis-specific genes in post-meiotic cells, including X-linked genes that escape sex chromosome inactivation in haploid cells. Crotonylation marks active promoters and enhancers and confers resistance to transcriptional repressors. It is also associated with post-meiotically activated genes on autosomes.</text>
</comment>
<comment type="PTM">
    <text evidence="12">Hydroxybutyrylation of histones is induced by starvation.</text>
</comment>
<comment type="PTM">
    <text evidence="1">Lactylated in macrophages by EP300/P300 by using lactoyl-CoA directly derived from endogenous or exogenous lactate, leading to stimulates gene transcription.</text>
</comment>
<comment type="similarity">
    <text evidence="13">Belongs to the histone H2A family.</text>
</comment>